<keyword id="KW-0067">ATP-binding</keyword>
<keyword id="KW-0963">Cytoplasm</keyword>
<keyword id="KW-0436">Ligase</keyword>
<keyword id="KW-0547">Nucleotide-binding</keyword>
<keyword id="KW-0566">Pantothenate biosynthesis</keyword>
<sequence length="281" mass="31995">MVVVGKIHEMKDIVKKLKKEGKTIGFVPTMGYLHEGHLSLVRKSKSQNDITIMSIFVNPIQFGPNEDYDRYPRDFERDKNLAEKEGVDYVFYPSVKEMYPDDFKTVVSVKKITDIMCGKSRPGHFDGVATVVLKLFNIVNPDRAYFGQKDAQQLAVIKQMVKDLNLDVEIVPCPIVREEDGLAMSSRNTYLSGDERKSATVLYRALNLAKDLIEKGERNVSKLKKAMEDLILKEKYTKIDYIEFVNYDTFEPISKVEGKVLIALAVFVGTTRLIDNIVVEV</sequence>
<proteinExistence type="inferred from homology"/>
<evidence type="ECO:0000255" key="1">
    <source>
        <dbReference type="HAMAP-Rule" id="MF_00158"/>
    </source>
</evidence>
<protein>
    <recommendedName>
        <fullName evidence="1">Pantothenate synthetase</fullName>
        <shortName evidence="1">PS</shortName>
        <ecNumber evidence="1">6.3.2.1</ecNumber>
    </recommendedName>
    <alternativeName>
        <fullName evidence="1">Pantoate--beta-alanine ligase</fullName>
    </alternativeName>
    <alternativeName>
        <fullName evidence="1">Pantoate-activating enzyme</fullName>
    </alternativeName>
</protein>
<reference key="1">
    <citation type="submission" date="2007-04" db="EMBL/GenBank/DDBJ databases">
        <title>Genome sequence of the thermophilic hydrogen-producing bacterium Caldicellulosiruptor saccharolyticus DSM 8903.</title>
        <authorList>
            <person name="Copeland A."/>
            <person name="Lucas S."/>
            <person name="Lapidus A."/>
            <person name="Barry K."/>
            <person name="Detter J.C."/>
            <person name="Glavina del Rio T."/>
            <person name="Hammon N."/>
            <person name="Israni S."/>
            <person name="Dalin E."/>
            <person name="Tice H."/>
            <person name="Pitluck S."/>
            <person name="Kiss H."/>
            <person name="Brettin T."/>
            <person name="Bruce D."/>
            <person name="Han C."/>
            <person name="Schmutz J."/>
            <person name="Larimer F."/>
            <person name="Land M."/>
            <person name="Hauser L."/>
            <person name="Kyrpides N."/>
            <person name="Lykidis A."/>
            <person name="van de Werken H.J.G."/>
            <person name="Verhaart M.R.A."/>
            <person name="VanFossen A.L."/>
            <person name="Lewis D.L."/>
            <person name="Nichols J.D."/>
            <person name="Goorissen H.P."/>
            <person name="van Niel E.W.J."/>
            <person name="Stams F.J.M."/>
            <person name="Willquist K.U."/>
            <person name="Ward D.E."/>
            <person name="van der Oost J."/>
            <person name="Kelly R.M."/>
            <person name="Kengen S.M.W."/>
            <person name="Richardson P."/>
        </authorList>
    </citation>
    <scope>NUCLEOTIDE SEQUENCE [LARGE SCALE GENOMIC DNA]</scope>
    <source>
        <strain>ATCC 43494 / DSM 8903 / Tp8T 6331</strain>
    </source>
</reference>
<organism>
    <name type="scientific">Caldicellulosiruptor saccharolyticus (strain ATCC 43494 / DSM 8903 / Tp8T 6331)</name>
    <dbReference type="NCBI Taxonomy" id="351627"/>
    <lineage>
        <taxon>Bacteria</taxon>
        <taxon>Bacillati</taxon>
        <taxon>Bacillota</taxon>
        <taxon>Bacillota incertae sedis</taxon>
        <taxon>Caldicellulosiruptorales</taxon>
        <taxon>Caldicellulosiruptoraceae</taxon>
        <taxon>Caldicellulosiruptor</taxon>
    </lineage>
</organism>
<gene>
    <name evidence="1" type="primary">panC</name>
    <name type="ordered locus">Csac_2709</name>
</gene>
<comment type="function">
    <text evidence="1">Catalyzes the condensation of pantoate with beta-alanine in an ATP-dependent reaction via a pantoyl-adenylate intermediate.</text>
</comment>
<comment type="catalytic activity">
    <reaction evidence="1">
        <text>(R)-pantoate + beta-alanine + ATP = (R)-pantothenate + AMP + diphosphate + H(+)</text>
        <dbReference type="Rhea" id="RHEA:10912"/>
        <dbReference type="ChEBI" id="CHEBI:15378"/>
        <dbReference type="ChEBI" id="CHEBI:15980"/>
        <dbReference type="ChEBI" id="CHEBI:29032"/>
        <dbReference type="ChEBI" id="CHEBI:30616"/>
        <dbReference type="ChEBI" id="CHEBI:33019"/>
        <dbReference type="ChEBI" id="CHEBI:57966"/>
        <dbReference type="ChEBI" id="CHEBI:456215"/>
        <dbReference type="EC" id="6.3.2.1"/>
    </reaction>
</comment>
<comment type="pathway">
    <text evidence="1">Cofactor biosynthesis; (R)-pantothenate biosynthesis; (R)-pantothenate from (R)-pantoate and beta-alanine: step 1/1.</text>
</comment>
<comment type="subunit">
    <text evidence="1">Homodimer.</text>
</comment>
<comment type="subcellular location">
    <subcellularLocation>
        <location evidence="1">Cytoplasm</location>
    </subcellularLocation>
</comment>
<comment type="miscellaneous">
    <text evidence="1">The reaction proceeds by a bi uni uni bi ping pong mechanism.</text>
</comment>
<comment type="similarity">
    <text evidence="1">Belongs to the pantothenate synthetase family.</text>
</comment>
<name>PANC_CALS8</name>
<dbReference type="EC" id="6.3.2.1" evidence="1"/>
<dbReference type="EMBL" id="CP000679">
    <property type="protein sequence ID" value="ABP68278.1"/>
    <property type="molecule type" value="Genomic_DNA"/>
</dbReference>
<dbReference type="RefSeq" id="WP_011918195.1">
    <property type="nucleotide sequence ID" value="NC_009437.1"/>
</dbReference>
<dbReference type="SMR" id="A4XMZ3"/>
<dbReference type="STRING" id="351627.Csac_2709"/>
<dbReference type="KEGG" id="csc:Csac_2709"/>
<dbReference type="eggNOG" id="COG0414">
    <property type="taxonomic scope" value="Bacteria"/>
</dbReference>
<dbReference type="HOGENOM" id="CLU_047148_0_0_9"/>
<dbReference type="OrthoDB" id="9773087at2"/>
<dbReference type="UniPathway" id="UPA00028">
    <property type="reaction ID" value="UER00005"/>
</dbReference>
<dbReference type="Proteomes" id="UP000000256">
    <property type="component" value="Chromosome"/>
</dbReference>
<dbReference type="GO" id="GO:0005829">
    <property type="term" value="C:cytosol"/>
    <property type="evidence" value="ECO:0007669"/>
    <property type="project" value="TreeGrafter"/>
</dbReference>
<dbReference type="GO" id="GO:0005524">
    <property type="term" value="F:ATP binding"/>
    <property type="evidence" value="ECO:0007669"/>
    <property type="project" value="UniProtKB-KW"/>
</dbReference>
<dbReference type="GO" id="GO:0004592">
    <property type="term" value="F:pantoate-beta-alanine ligase activity"/>
    <property type="evidence" value="ECO:0007669"/>
    <property type="project" value="UniProtKB-UniRule"/>
</dbReference>
<dbReference type="GO" id="GO:0015940">
    <property type="term" value="P:pantothenate biosynthetic process"/>
    <property type="evidence" value="ECO:0007669"/>
    <property type="project" value="UniProtKB-UniRule"/>
</dbReference>
<dbReference type="CDD" id="cd00560">
    <property type="entry name" value="PanC"/>
    <property type="match status" value="1"/>
</dbReference>
<dbReference type="FunFam" id="3.30.1300.10:FF:000001">
    <property type="entry name" value="Pantothenate synthetase"/>
    <property type="match status" value="1"/>
</dbReference>
<dbReference type="FunFam" id="3.40.50.620:FF:000013">
    <property type="entry name" value="Pantothenate synthetase"/>
    <property type="match status" value="1"/>
</dbReference>
<dbReference type="Gene3D" id="3.40.50.620">
    <property type="entry name" value="HUPs"/>
    <property type="match status" value="1"/>
</dbReference>
<dbReference type="Gene3D" id="3.30.1300.10">
    <property type="entry name" value="Pantoate-beta-alanine ligase, C-terminal domain"/>
    <property type="match status" value="1"/>
</dbReference>
<dbReference type="HAMAP" id="MF_00158">
    <property type="entry name" value="PanC"/>
    <property type="match status" value="1"/>
</dbReference>
<dbReference type="InterPro" id="IPR004821">
    <property type="entry name" value="Cyt_trans-like"/>
</dbReference>
<dbReference type="InterPro" id="IPR003721">
    <property type="entry name" value="Pantoate_ligase"/>
</dbReference>
<dbReference type="InterPro" id="IPR042176">
    <property type="entry name" value="Pantoate_ligase_C"/>
</dbReference>
<dbReference type="InterPro" id="IPR014729">
    <property type="entry name" value="Rossmann-like_a/b/a_fold"/>
</dbReference>
<dbReference type="NCBIfam" id="TIGR00125">
    <property type="entry name" value="cyt_tran_rel"/>
    <property type="match status" value="1"/>
</dbReference>
<dbReference type="NCBIfam" id="TIGR00018">
    <property type="entry name" value="panC"/>
    <property type="match status" value="1"/>
</dbReference>
<dbReference type="PANTHER" id="PTHR21299">
    <property type="entry name" value="CYTIDYLATE KINASE/PANTOATE-BETA-ALANINE LIGASE"/>
    <property type="match status" value="1"/>
</dbReference>
<dbReference type="PANTHER" id="PTHR21299:SF1">
    <property type="entry name" value="PANTOATE--BETA-ALANINE LIGASE"/>
    <property type="match status" value="1"/>
</dbReference>
<dbReference type="Pfam" id="PF02569">
    <property type="entry name" value="Pantoate_ligase"/>
    <property type="match status" value="1"/>
</dbReference>
<dbReference type="SUPFAM" id="SSF52374">
    <property type="entry name" value="Nucleotidylyl transferase"/>
    <property type="match status" value="1"/>
</dbReference>
<accession>A4XMZ3</accession>
<feature type="chain" id="PRO_1000076845" description="Pantothenate synthetase">
    <location>
        <begin position="1"/>
        <end position="281"/>
    </location>
</feature>
<feature type="active site" description="Proton donor" evidence="1">
    <location>
        <position position="37"/>
    </location>
</feature>
<feature type="binding site" evidence="1">
    <location>
        <begin position="30"/>
        <end position="37"/>
    </location>
    <ligand>
        <name>ATP</name>
        <dbReference type="ChEBI" id="CHEBI:30616"/>
    </ligand>
</feature>
<feature type="binding site" evidence="1">
    <location>
        <position position="61"/>
    </location>
    <ligand>
        <name>(R)-pantoate</name>
        <dbReference type="ChEBI" id="CHEBI:15980"/>
    </ligand>
</feature>
<feature type="binding site" evidence="1">
    <location>
        <position position="61"/>
    </location>
    <ligand>
        <name>beta-alanine</name>
        <dbReference type="ChEBI" id="CHEBI:57966"/>
    </ligand>
</feature>
<feature type="binding site" evidence="1">
    <location>
        <begin position="147"/>
        <end position="150"/>
    </location>
    <ligand>
        <name>ATP</name>
        <dbReference type="ChEBI" id="CHEBI:30616"/>
    </ligand>
</feature>
<feature type="binding site" evidence="1">
    <location>
        <position position="153"/>
    </location>
    <ligand>
        <name>(R)-pantoate</name>
        <dbReference type="ChEBI" id="CHEBI:15980"/>
    </ligand>
</feature>
<feature type="binding site" evidence="1">
    <location>
        <position position="176"/>
    </location>
    <ligand>
        <name>ATP</name>
        <dbReference type="ChEBI" id="CHEBI:30616"/>
    </ligand>
</feature>
<feature type="binding site" evidence="1">
    <location>
        <begin position="184"/>
        <end position="187"/>
    </location>
    <ligand>
        <name>ATP</name>
        <dbReference type="ChEBI" id="CHEBI:30616"/>
    </ligand>
</feature>